<evidence type="ECO:0000250" key="1"/>
<evidence type="ECO:0000255" key="2"/>
<evidence type="ECO:0000255" key="3">
    <source>
        <dbReference type="PROSITE-ProRule" id="PRU10037"/>
    </source>
</evidence>
<evidence type="ECO:0000303" key="4">
    <source>
    </source>
</evidence>
<evidence type="ECO:0000305" key="5"/>
<accession>Q8BM14</accession>
<accession>Q7TML7</accession>
<gene>
    <name type="primary">Lipk</name>
    <name type="synonym">Lipl2</name>
</gene>
<feature type="signal peptide" evidence="2">
    <location>
        <begin position="1"/>
        <end position="19"/>
    </location>
</feature>
<feature type="chain" id="PRO_0000286700" description="Lipase member K">
    <location>
        <begin position="20"/>
        <end position="398"/>
    </location>
</feature>
<feature type="domain" description="AB hydrolase-1" evidence="2">
    <location>
        <begin position="78"/>
        <end position="377"/>
    </location>
</feature>
<feature type="active site" description="Nucleophile" evidence="1">
    <location>
        <position position="171"/>
    </location>
</feature>
<feature type="active site" description="Charge relay system" evidence="3">
    <location>
        <position position="342"/>
    </location>
</feature>
<feature type="active site" description="Charge relay system" evidence="3">
    <location>
        <position position="371"/>
    </location>
</feature>
<feature type="glycosylation site" description="N-linked (GlcNAc...) asparagine" evidence="2">
    <location>
        <position position="270"/>
    </location>
</feature>
<feature type="glycosylation site" description="N-linked (GlcNAc...) asparagine" evidence="2">
    <location>
        <position position="326"/>
    </location>
</feature>
<feature type="disulfide bond" evidence="1">
    <location>
        <begin position="245"/>
        <end position="254"/>
    </location>
</feature>
<feature type="splice variant" id="VSP_025143" description="In isoform 2." evidence="4">
    <original>I</original>
    <variation>IVCVFQ</variation>
    <location>
        <position position="34"/>
    </location>
</feature>
<feature type="sequence conflict" description="In Ref. 2; AAH55815." evidence="5" ref="2">
    <original>L</original>
    <variation>F</variation>
    <location>
        <position position="4"/>
    </location>
</feature>
<comment type="function">
    <text evidence="1">Plays a highly specific role in the last step of keratinocyte differentiation. May have an essential function in lipid metabolism of the most differentiated epidermal layers (By similarity).</text>
</comment>
<comment type="subcellular location">
    <subcellularLocation>
        <location evidence="5">Secreted</location>
    </subcellularLocation>
</comment>
<comment type="alternative products">
    <event type="alternative splicing"/>
    <isoform>
        <id>Q8BM14-1</id>
        <name>1</name>
        <sequence type="displayed"/>
    </isoform>
    <isoform>
        <id>Q8BM14-2</id>
        <name>2</name>
        <sequence type="described" ref="VSP_025143"/>
    </isoform>
</comment>
<comment type="similarity">
    <text evidence="5">Belongs to the AB hydrolase superfamily. Lipase family.</text>
</comment>
<dbReference type="EC" id="3.1.1.-"/>
<dbReference type="EMBL" id="AK037106">
    <property type="protein sequence ID" value="BAC29705.1"/>
    <property type="molecule type" value="mRNA"/>
</dbReference>
<dbReference type="EMBL" id="AK162706">
    <property type="protein sequence ID" value="BAE37029.1"/>
    <property type="molecule type" value="mRNA"/>
</dbReference>
<dbReference type="EMBL" id="BC055815">
    <property type="protein sequence ID" value="AAH55815.1"/>
    <property type="molecule type" value="mRNA"/>
</dbReference>
<dbReference type="CCDS" id="CCDS57143.1">
    <molecule id="Q8BM14-2"/>
</dbReference>
<dbReference type="CCDS" id="CCDS89381.1">
    <molecule id="Q8BM14-1"/>
</dbReference>
<dbReference type="RefSeq" id="NP_001192278.1">
    <molecule id="Q8BM14-2"/>
    <property type="nucleotide sequence ID" value="NM_001205349.1"/>
</dbReference>
<dbReference type="RefSeq" id="NP_766425.1">
    <molecule id="Q8BM14-1"/>
    <property type="nucleotide sequence ID" value="NM_172837.4"/>
</dbReference>
<dbReference type="SMR" id="Q8BM14"/>
<dbReference type="BioGRID" id="232215">
    <property type="interactions" value="1"/>
</dbReference>
<dbReference type="FunCoup" id="Q8BM14">
    <property type="interactions" value="926"/>
</dbReference>
<dbReference type="STRING" id="10090.ENSMUSP00000053913"/>
<dbReference type="ESTHER" id="mouse-LIPK">
    <property type="family name" value="Acidic_Lipase"/>
</dbReference>
<dbReference type="GlyCosmos" id="Q8BM14">
    <property type="glycosylation" value="2 sites, No reported glycans"/>
</dbReference>
<dbReference type="GlyGen" id="Q8BM14">
    <property type="glycosylation" value="2 sites"/>
</dbReference>
<dbReference type="PhosphoSitePlus" id="Q8BM14"/>
<dbReference type="PaxDb" id="10090-ENSMUSP00000053913"/>
<dbReference type="ProteomicsDB" id="290034">
    <molecule id="Q8BM14-1"/>
</dbReference>
<dbReference type="ProteomicsDB" id="290035">
    <molecule id="Q8BM14-2"/>
</dbReference>
<dbReference type="Antibodypedia" id="56554">
    <property type="antibodies" value="99 antibodies from 14 providers"/>
</dbReference>
<dbReference type="DNASU" id="240633"/>
<dbReference type="Ensembl" id="ENSMUST00000054260.8">
    <molecule id="Q8BM14-2"/>
    <property type="protein sequence ID" value="ENSMUSP00000053913.7"/>
    <property type="gene ID" value="ENSMUSG00000024771.8"/>
</dbReference>
<dbReference type="Ensembl" id="ENSMUST00000225505.2">
    <molecule id="Q8BM14-1"/>
    <property type="protein sequence ID" value="ENSMUSP00000152955.2"/>
    <property type="gene ID" value="ENSMUSG00000024771.8"/>
</dbReference>
<dbReference type="GeneID" id="240633"/>
<dbReference type="KEGG" id="mmu:240633"/>
<dbReference type="UCSC" id="uc008hfx.2">
    <molecule id="Q8BM14-1"/>
    <property type="organism name" value="mouse"/>
</dbReference>
<dbReference type="UCSC" id="uc012bkr.2">
    <molecule id="Q8BM14-2"/>
    <property type="organism name" value="mouse"/>
</dbReference>
<dbReference type="AGR" id="MGI:2679259"/>
<dbReference type="CTD" id="643414"/>
<dbReference type="MGI" id="MGI:2679259">
    <property type="gene designation" value="Lipk"/>
</dbReference>
<dbReference type="VEuPathDB" id="HostDB:ENSMUSG00000024771"/>
<dbReference type="eggNOG" id="KOG2624">
    <property type="taxonomic scope" value="Eukaryota"/>
</dbReference>
<dbReference type="GeneTree" id="ENSGT00940000160031"/>
<dbReference type="HOGENOM" id="CLU_010974_0_0_1"/>
<dbReference type="InParanoid" id="Q8BM14"/>
<dbReference type="OMA" id="GYPYEKY"/>
<dbReference type="OrthoDB" id="78324at9989"/>
<dbReference type="PhylomeDB" id="Q8BM14"/>
<dbReference type="TreeFam" id="TF315485"/>
<dbReference type="Reactome" id="R-MMU-6809371">
    <property type="pathway name" value="Formation of the cornified envelope"/>
</dbReference>
<dbReference type="BioGRID-ORCS" id="240633">
    <property type="hits" value="4 hits in 82 CRISPR screens"/>
</dbReference>
<dbReference type="ChiTaRS" id="Lipk">
    <property type="organism name" value="mouse"/>
</dbReference>
<dbReference type="PRO" id="PR:Q8BM14"/>
<dbReference type="Proteomes" id="UP000000589">
    <property type="component" value="Chromosome 19"/>
</dbReference>
<dbReference type="RNAct" id="Q8BM14">
    <property type="molecule type" value="protein"/>
</dbReference>
<dbReference type="Bgee" id="ENSMUSG00000024771">
    <property type="expression patterns" value="Expressed in esophagus and 27 other cell types or tissues"/>
</dbReference>
<dbReference type="ExpressionAtlas" id="Q8BM14">
    <property type="expression patterns" value="baseline and differential"/>
</dbReference>
<dbReference type="GO" id="GO:0005576">
    <property type="term" value="C:extracellular region"/>
    <property type="evidence" value="ECO:0007669"/>
    <property type="project" value="UniProtKB-SubCell"/>
</dbReference>
<dbReference type="GO" id="GO:0016788">
    <property type="term" value="F:hydrolase activity, acting on ester bonds"/>
    <property type="evidence" value="ECO:0007669"/>
    <property type="project" value="InterPro"/>
</dbReference>
<dbReference type="GO" id="GO:0016042">
    <property type="term" value="P:lipid catabolic process"/>
    <property type="evidence" value="ECO:0007669"/>
    <property type="project" value="UniProtKB-KW"/>
</dbReference>
<dbReference type="FunFam" id="3.40.50.1820:FF:000012">
    <property type="entry name" value="Lipase"/>
    <property type="match status" value="1"/>
</dbReference>
<dbReference type="Gene3D" id="3.40.50.1820">
    <property type="entry name" value="alpha/beta hydrolase"/>
    <property type="match status" value="1"/>
</dbReference>
<dbReference type="InterPro" id="IPR000073">
    <property type="entry name" value="AB_hydrolase_1"/>
</dbReference>
<dbReference type="InterPro" id="IPR029058">
    <property type="entry name" value="AB_hydrolase_fold"/>
</dbReference>
<dbReference type="InterPro" id="IPR025483">
    <property type="entry name" value="Lipase_euk"/>
</dbReference>
<dbReference type="PANTHER" id="PTHR11005">
    <property type="entry name" value="LYSOSOMAL ACID LIPASE-RELATED"/>
    <property type="match status" value="1"/>
</dbReference>
<dbReference type="Pfam" id="PF00561">
    <property type="entry name" value="Abhydrolase_1"/>
    <property type="match status" value="1"/>
</dbReference>
<dbReference type="PIRSF" id="PIRSF000862">
    <property type="entry name" value="Steryl_ester_lip"/>
    <property type="match status" value="1"/>
</dbReference>
<dbReference type="SUPFAM" id="SSF53474">
    <property type="entry name" value="alpha/beta-Hydrolases"/>
    <property type="match status" value="1"/>
</dbReference>
<dbReference type="PROSITE" id="PS00120">
    <property type="entry name" value="LIPASE_SER"/>
    <property type="match status" value="1"/>
</dbReference>
<reference key="1">
    <citation type="journal article" date="2005" name="Science">
        <title>The transcriptional landscape of the mammalian genome.</title>
        <authorList>
            <person name="Carninci P."/>
            <person name="Kasukawa T."/>
            <person name="Katayama S."/>
            <person name="Gough J."/>
            <person name="Frith M.C."/>
            <person name="Maeda N."/>
            <person name="Oyama R."/>
            <person name="Ravasi T."/>
            <person name="Lenhard B."/>
            <person name="Wells C."/>
            <person name="Kodzius R."/>
            <person name="Shimokawa K."/>
            <person name="Bajic V.B."/>
            <person name="Brenner S.E."/>
            <person name="Batalov S."/>
            <person name="Forrest A.R."/>
            <person name="Zavolan M."/>
            <person name="Davis M.J."/>
            <person name="Wilming L.G."/>
            <person name="Aidinis V."/>
            <person name="Allen J.E."/>
            <person name="Ambesi-Impiombato A."/>
            <person name="Apweiler R."/>
            <person name="Aturaliya R.N."/>
            <person name="Bailey T.L."/>
            <person name="Bansal M."/>
            <person name="Baxter L."/>
            <person name="Beisel K.W."/>
            <person name="Bersano T."/>
            <person name="Bono H."/>
            <person name="Chalk A.M."/>
            <person name="Chiu K.P."/>
            <person name="Choudhary V."/>
            <person name="Christoffels A."/>
            <person name="Clutterbuck D.R."/>
            <person name="Crowe M.L."/>
            <person name="Dalla E."/>
            <person name="Dalrymple B.P."/>
            <person name="de Bono B."/>
            <person name="Della Gatta G."/>
            <person name="di Bernardo D."/>
            <person name="Down T."/>
            <person name="Engstrom P."/>
            <person name="Fagiolini M."/>
            <person name="Faulkner G."/>
            <person name="Fletcher C.F."/>
            <person name="Fukushima T."/>
            <person name="Furuno M."/>
            <person name="Futaki S."/>
            <person name="Gariboldi M."/>
            <person name="Georgii-Hemming P."/>
            <person name="Gingeras T.R."/>
            <person name="Gojobori T."/>
            <person name="Green R.E."/>
            <person name="Gustincich S."/>
            <person name="Harbers M."/>
            <person name="Hayashi Y."/>
            <person name="Hensch T.K."/>
            <person name="Hirokawa N."/>
            <person name="Hill D."/>
            <person name="Huminiecki L."/>
            <person name="Iacono M."/>
            <person name="Ikeo K."/>
            <person name="Iwama A."/>
            <person name="Ishikawa T."/>
            <person name="Jakt M."/>
            <person name="Kanapin A."/>
            <person name="Katoh M."/>
            <person name="Kawasawa Y."/>
            <person name="Kelso J."/>
            <person name="Kitamura H."/>
            <person name="Kitano H."/>
            <person name="Kollias G."/>
            <person name="Krishnan S.P."/>
            <person name="Kruger A."/>
            <person name="Kummerfeld S.K."/>
            <person name="Kurochkin I.V."/>
            <person name="Lareau L.F."/>
            <person name="Lazarevic D."/>
            <person name="Lipovich L."/>
            <person name="Liu J."/>
            <person name="Liuni S."/>
            <person name="McWilliam S."/>
            <person name="Madan Babu M."/>
            <person name="Madera M."/>
            <person name="Marchionni L."/>
            <person name="Matsuda H."/>
            <person name="Matsuzawa S."/>
            <person name="Miki H."/>
            <person name="Mignone F."/>
            <person name="Miyake S."/>
            <person name="Morris K."/>
            <person name="Mottagui-Tabar S."/>
            <person name="Mulder N."/>
            <person name="Nakano N."/>
            <person name="Nakauchi H."/>
            <person name="Ng P."/>
            <person name="Nilsson R."/>
            <person name="Nishiguchi S."/>
            <person name="Nishikawa S."/>
            <person name="Nori F."/>
            <person name="Ohara O."/>
            <person name="Okazaki Y."/>
            <person name="Orlando V."/>
            <person name="Pang K.C."/>
            <person name="Pavan W.J."/>
            <person name="Pavesi G."/>
            <person name="Pesole G."/>
            <person name="Petrovsky N."/>
            <person name="Piazza S."/>
            <person name="Reed J."/>
            <person name="Reid J.F."/>
            <person name="Ring B.Z."/>
            <person name="Ringwald M."/>
            <person name="Rost B."/>
            <person name="Ruan Y."/>
            <person name="Salzberg S.L."/>
            <person name="Sandelin A."/>
            <person name="Schneider C."/>
            <person name="Schoenbach C."/>
            <person name="Sekiguchi K."/>
            <person name="Semple C.A."/>
            <person name="Seno S."/>
            <person name="Sessa L."/>
            <person name="Sheng Y."/>
            <person name="Shibata Y."/>
            <person name="Shimada H."/>
            <person name="Shimada K."/>
            <person name="Silva D."/>
            <person name="Sinclair B."/>
            <person name="Sperling S."/>
            <person name="Stupka E."/>
            <person name="Sugiura K."/>
            <person name="Sultana R."/>
            <person name="Takenaka Y."/>
            <person name="Taki K."/>
            <person name="Tammoja K."/>
            <person name="Tan S.L."/>
            <person name="Tang S."/>
            <person name="Taylor M.S."/>
            <person name="Tegner J."/>
            <person name="Teichmann S.A."/>
            <person name="Ueda H.R."/>
            <person name="van Nimwegen E."/>
            <person name="Verardo R."/>
            <person name="Wei C.L."/>
            <person name="Yagi K."/>
            <person name="Yamanishi H."/>
            <person name="Zabarovsky E."/>
            <person name="Zhu S."/>
            <person name="Zimmer A."/>
            <person name="Hide W."/>
            <person name="Bult C."/>
            <person name="Grimmond S.M."/>
            <person name="Teasdale R.D."/>
            <person name="Liu E.T."/>
            <person name="Brusic V."/>
            <person name="Quackenbush J."/>
            <person name="Wahlestedt C."/>
            <person name="Mattick J.S."/>
            <person name="Hume D.A."/>
            <person name="Kai C."/>
            <person name="Sasaki D."/>
            <person name="Tomaru Y."/>
            <person name="Fukuda S."/>
            <person name="Kanamori-Katayama M."/>
            <person name="Suzuki M."/>
            <person name="Aoki J."/>
            <person name="Arakawa T."/>
            <person name="Iida J."/>
            <person name="Imamura K."/>
            <person name="Itoh M."/>
            <person name="Kato T."/>
            <person name="Kawaji H."/>
            <person name="Kawagashira N."/>
            <person name="Kawashima T."/>
            <person name="Kojima M."/>
            <person name="Kondo S."/>
            <person name="Konno H."/>
            <person name="Nakano K."/>
            <person name="Ninomiya N."/>
            <person name="Nishio T."/>
            <person name="Okada M."/>
            <person name="Plessy C."/>
            <person name="Shibata K."/>
            <person name="Shiraki T."/>
            <person name="Suzuki S."/>
            <person name="Tagami M."/>
            <person name="Waki K."/>
            <person name="Watahiki A."/>
            <person name="Okamura-Oho Y."/>
            <person name="Suzuki H."/>
            <person name="Kawai J."/>
            <person name="Hayashizaki Y."/>
        </authorList>
    </citation>
    <scope>NUCLEOTIDE SEQUENCE [LARGE SCALE MRNA] (ISOFORM 1)</scope>
    <source>
        <strain>C57BL/6J</strain>
        <tissue>Vagina</tissue>
    </source>
</reference>
<reference key="2">
    <citation type="journal article" date="2004" name="Genome Res.">
        <title>The status, quality, and expansion of the NIH full-length cDNA project: the Mammalian Gene Collection (MGC).</title>
        <authorList>
            <consortium name="The MGC Project Team"/>
        </authorList>
    </citation>
    <scope>NUCLEOTIDE SEQUENCE [LARGE SCALE MRNA] (ISOFORM 2)</scope>
    <source>
        <strain>Czech II</strain>
        <tissue>Mammary tumor</tissue>
    </source>
</reference>
<name>LIPK_MOUSE</name>
<organism>
    <name type="scientific">Mus musculus</name>
    <name type="common">Mouse</name>
    <dbReference type="NCBI Taxonomy" id="10090"/>
    <lineage>
        <taxon>Eukaryota</taxon>
        <taxon>Metazoa</taxon>
        <taxon>Chordata</taxon>
        <taxon>Craniata</taxon>
        <taxon>Vertebrata</taxon>
        <taxon>Euteleostomi</taxon>
        <taxon>Mammalia</taxon>
        <taxon>Eutheria</taxon>
        <taxon>Euarchontoglires</taxon>
        <taxon>Glires</taxon>
        <taxon>Rodentia</taxon>
        <taxon>Myomorpha</taxon>
        <taxon>Muroidea</taxon>
        <taxon>Muridae</taxon>
        <taxon>Murinae</taxon>
        <taxon>Mus</taxon>
        <taxon>Mus</taxon>
    </lineage>
</organism>
<sequence length="398" mass="45243">MWWLLATTCCVLLSGPIDGYKQESITNPEANMNISELISYWGYPYEKHDVITEDGYILGTYRIPHGKGCSRKTAPKAVVYLQHGLIASANNWICNLPNNSLAFLLADSGYDVWLGNSRGNTWSRNHLRLSPKSPQYWAFSWDEMAKYDLPATVNLILEKSGQKQLFYVGHSQGTTIAFIAFSTNPELAKKIRLFFALAPVATVKYTRSPMKKLTTLSRKAVKVLFGDKMFSTHTWFEQFIATKVCNRKLFHQLCSNFLFSLSGFDPQNLNMSRLDVYLSQSPAGTSVQNMLHWAQAVNSGQLQAFDWGNPDQNMMHFNQLTPPVYNISKMRVPTAMWSGGQDVVADAKDTKNLLPKIANLIYYKEIPHYNHMDFYLGQDAPQEVYGDLIRMIEESLQN</sequence>
<keyword id="KW-0025">Alternative splicing</keyword>
<keyword id="KW-1015">Disulfide bond</keyword>
<keyword id="KW-0325">Glycoprotein</keyword>
<keyword id="KW-0378">Hydrolase</keyword>
<keyword id="KW-0442">Lipid degradation</keyword>
<keyword id="KW-0443">Lipid metabolism</keyword>
<keyword id="KW-1185">Reference proteome</keyword>
<keyword id="KW-0964">Secreted</keyword>
<keyword id="KW-0732">Signal</keyword>
<proteinExistence type="evidence at transcript level"/>
<protein>
    <recommendedName>
        <fullName>Lipase member K</fullName>
        <ecNumber>3.1.1.-</ecNumber>
    </recommendedName>
    <alternativeName>
        <fullName>Lipase-like abhydrolase domain-containing protein 2</fullName>
    </alternativeName>
</protein>